<dbReference type="EMBL" id="AAFI02000052">
    <property type="protein sequence ID" value="EAL65800.1"/>
    <property type="molecule type" value="Genomic_DNA"/>
</dbReference>
<dbReference type="RefSeq" id="XP_639163.1">
    <property type="nucleotide sequence ID" value="XM_634071.1"/>
</dbReference>
<dbReference type="SMR" id="Q54R84"/>
<dbReference type="FunCoup" id="Q54R84">
    <property type="interactions" value="60"/>
</dbReference>
<dbReference type="STRING" id="44689.Q54R84"/>
<dbReference type="PaxDb" id="44689-DDB0234245"/>
<dbReference type="EnsemblProtists" id="EAL65800">
    <property type="protein sequence ID" value="EAL65800"/>
    <property type="gene ID" value="DDB_G0283319"/>
</dbReference>
<dbReference type="GeneID" id="8624033"/>
<dbReference type="KEGG" id="ddi:DDB_G0283319"/>
<dbReference type="dictyBase" id="DDB_G0283319">
    <property type="gene designation" value="ap4b1"/>
</dbReference>
<dbReference type="VEuPathDB" id="AmoebaDB:DDB_G0283319"/>
<dbReference type="eggNOG" id="KOG1061">
    <property type="taxonomic scope" value="Eukaryota"/>
</dbReference>
<dbReference type="HOGENOM" id="CLU_006320_4_5_1"/>
<dbReference type="InParanoid" id="Q54R84"/>
<dbReference type="OMA" id="ANCMHAL"/>
<dbReference type="PhylomeDB" id="Q54R84"/>
<dbReference type="Reactome" id="R-DDI-432720">
    <property type="pathway name" value="Lysosome Vesicle Biogenesis"/>
</dbReference>
<dbReference type="PRO" id="PR:Q54R84"/>
<dbReference type="Proteomes" id="UP000002195">
    <property type="component" value="Chromosome 4"/>
</dbReference>
<dbReference type="GO" id="GO:0030131">
    <property type="term" value="C:clathrin adaptor complex"/>
    <property type="evidence" value="ECO:0007669"/>
    <property type="project" value="InterPro"/>
</dbReference>
<dbReference type="GO" id="GO:0005794">
    <property type="term" value="C:Golgi apparatus"/>
    <property type="evidence" value="ECO:0007669"/>
    <property type="project" value="UniProtKB-SubCell"/>
</dbReference>
<dbReference type="GO" id="GO:0030276">
    <property type="term" value="F:clathrin binding"/>
    <property type="evidence" value="ECO:0007669"/>
    <property type="project" value="InterPro"/>
</dbReference>
<dbReference type="GO" id="GO:0006886">
    <property type="term" value="P:intracellular protein transport"/>
    <property type="evidence" value="ECO:0007669"/>
    <property type="project" value="InterPro"/>
</dbReference>
<dbReference type="GO" id="GO:0016192">
    <property type="term" value="P:vesicle-mediated transport"/>
    <property type="evidence" value="ECO:0007669"/>
    <property type="project" value="InterPro"/>
</dbReference>
<dbReference type="FunFam" id="1.25.10.10:FF:001488">
    <property type="entry name" value="AP complex subunit beta"/>
    <property type="match status" value="1"/>
</dbReference>
<dbReference type="FunFam" id="3.30.310.10:FF:000051">
    <property type="entry name" value="AP complex subunit beta"/>
    <property type="match status" value="1"/>
</dbReference>
<dbReference type="Gene3D" id="1.25.10.10">
    <property type="entry name" value="Leucine-rich Repeat Variant"/>
    <property type="match status" value="1"/>
</dbReference>
<dbReference type="Gene3D" id="3.30.310.10">
    <property type="entry name" value="TATA-Binding Protein"/>
    <property type="match status" value="1"/>
</dbReference>
<dbReference type="InterPro" id="IPR026739">
    <property type="entry name" value="AP_beta"/>
</dbReference>
<dbReference type="InterPro" id="IPR016342">
    <property type="entry name" value="AP_complex_bsu_1_2_4"/>
</dbReference>
<dbReference type="InterPro" id="IPR011989">
    <property type="entry name" value="ARM-like"/>
</dbReference>
<dbReference type="InterPro" id="IPR016024">
    <property type="entry name" value="ARM-type_fold"/>
</dbReference>
<dbReference type="InterPro" id="IPR015151">
    <property type="entry name" value="B-adaptin_app_sub_C"/>
</dbReference>
<dbReference type="InterPro" id="IPR002553">
    <property type="entry name" value="Clathrin/coatomer_adapt-like_N"/>
</dbReference>
<dbReference type="InterPro" id="IPR012295">
    <property type="entry name" value="TBP_dom_sf"/>
</dbReference>
<dbReference type="PANTHER" id="PTHR11134">
    <property type="entry name" value="ADAPTOR COMPLEX SUBUNIT BETA FAMILY MEMBER"/>
    <property type="match status" value="1"/>
</dbReference>
<dbReference type="Pfam" id="PF01602">
    <property type="entry name" value="Adaptin_N"/>
    <property type="match status" value="1"/>
</dbReference>
<dbReference type="Pfam" id="PF09066">
    <property type="entry name" value="B2-adapt-app_C"/>
    <property type="match status" value="1"/>
</dbReference>
<dbReference type="PIRSF" id="PIRSF002291">
    <property type="entry name" value="AP_complex_beta"/>
    <property type="match status" value="1"/>
</dbReference>
<dbReference type="SMART" id="SM01020">
    <property type="entry name" value="B2-adapt-app_C"/>
    <property type="match status" value="1"/>
</dbReference>
<dbReference type="SUPFAM" id="SSF48371">
    <property type="entry name" value="ARM repeat"/>
    <property type="match status" value="1"/>
</dbReference>
<protein>
    <recommendedName>
        <fullName evidence="3">AP-4 complex subunit beta</fullName>
    </recommendedName>
    <alternativeName>
        <fullName>AP-4 adaptor complex subunit beta</fullName>
    </alternativeName>
    <alternativeName>
        <fullName>Adaptor-related protein complex 4 subunit beta</fullName>
    </alternativeName>
    <alternativeName>
        <fullName>Beta subunit of AP-4</fullName>
    </alternativeName>
    <alternativeName>
        <fullName>Beta4-adaptin</fullName>
    </alternativeName>
</protein>
<proteinExistence type="inferred from homology"/>
<feature type="chain" id="PRO_0000328669" description="AP-4 complex subunit beta">
    <location>
        <begin position="1"/>
        <end position="838"/>
    </location>
</feature>
<feature type="region of interest" description="Hinge" evidence="1">
    <location>
        <begin position="582"/>
        <end position="673"/>
    </location>
</feature>
<feature type="region of interest" description="Disordered" evidence="2">
    <location>
        <begin position="648"/>
        <end position="683"/>
    </location>
</feature>
<feature type="region of interest" description="Ear" evidence="1">
    <location>
        <begin position="674"/>
        <end position="838"/>
    </location>
</feature>
<feature type="compositionally biased region" description="Low complexity" evidence="2">
    <location>
        <begin position="652"/>
        <end position="683"/>
    </location>
</feature>
<reference key="1">
    <citation type="journal article" date="2005" name="Nature">
        <title>The genome of the social amoeba Dictyostelium discoideum.</title>
        <authorList>
            <person name="Eichinger L."/>
            <person name="Pachebat J.A."/>
            <person name="Gloeckner G."/>
            <person name="Rajandream M.A."/>
            <person name="Sucgang R."/>
            <person name="Berriman M."/>
            <person name="Song J."/>
            <person name="Olsen R."/>
            <person name="Szafranski K."/>
            <person name="Xu Q."/>
            <person name="Tunggal B."/>
            <person name="Kummerfeld S."/>
            <person name="Madera M."/>
            <person name="Konfortov B.A."/>
            <person name="Rivero F."/>
            <person name="Bankier A.T."/>
            <person name="Lehmann R."/>
            <person name="Hamlin N."/>
            <person name="Davies R."/>
            <person name="Gaudet P."/>
            <person name="Fey P."/>
            <person name="Pilcher K."/>
            <person name="Chen G."/>
            <person name="Saunders D."/>
            <person name="Sodergren E.J."/>
            <person name="Davis P."/>
            <person name="Kerhornou A."/>
            <person name="Nie X."/>
            <person name="Hall N."/>
            <person name="Anjard C."/>
            <person name="Hemphill L."/>
            <person name="Bason N."/>
            <person name="Farbrother P."/>
            <person name="Desany B."/>
            <person name="Just E."/>
            <person name="Morio T."/>
            <person name="Rost R."/>
            <person name="Churcher C.M."/>
            <person name="Cooper J."/>
            <person name="Haydock S."/>
            <person name="van Driessche N."/>
            <person name="Cronin A."/>
            <person name="Goodhead I."/>
            <person name="Muzny D.M."/>
            <person name="Mourier T."/>
            <person name="Pain A."/>
            <person name="Lu M."/>
            <person name="Harper D."/>
            <person name="Lindsay R."/>
            <person name="Hauser H."/>
            <person name="James K.D."/>
            <person name="Quiles M."/>
            <person name="Madan Babu M."/>
            <person name="Saito T."/>
            <person name="Buchrieser C."/>
            <person name="Wardroper A."/>
            <person name="Felder M."/>
            <person name="Thangavelu M."/>
            <person name="Johnson D."/>
            <person name="Knights A."/>
            <person name="Loulseged H."/>
            <person name="Mungall K.L."/>
            <person name="Oliver K."/>
            <person name="Price C."/>
            <person name="Quail M.A."/>
            <person name="Urushihara H."/>
            <person name="Hernandez J."/>
            <person name="Rabbinowitsch E."/>
            <person name="Steffen D."/>
            <person name="Sanders M."/>
            <person name="Ma J."/>
            <person name="Kohara Y."/>
            <person name="Sharp S."/>
            <person name="Simmonds M.N."/>
            <person name="Spiegler S."/>
            <person name="Tivey A."/>
            <person name="Sugano S."/>
            <person name="White B."/>
            <person name="Walker D."/>
            <person name="Woodward J.R."/>
            <person name="Winckler T."/>
            <person name="Tanaka Y."/>
            <person name="Shaulsky G."/>
            <person name="Schleicher M."/>
            <person name="Weinstock G.M."/>
            <person name="Rosenthal A."/>
            <person name="Cox E.C."/>
            <person name="Chisholm R.L."/>
            <person name="Gibbs R.A."/>
            <person name="Loomis W.F."/>
            <person name="Platzer M."/>
            <person name="Kay R.R."/>
            <person name="Williams J.G."/>
            <person name="Dear P.H."/>
            <person name="Noegel A.A."/>
            <person name="Barrell B.G."/>
            <person name="Kuspa A."/>
        </authorList>
    </citation>
    <scope>NUCLEOTIDE SEQUENCE [LARGE SCALE GENOMIC DNA]</scope>
    <source>
        <strain>AX4</strain>
    </source>
</reference>
<gene>
    <name type="primary">ap4b1</name>
    <name type="ORF">DDB_G0283319</name>
</gene>
<comment type="function">
    <text evidence="1">Probable component of an adaptor protein complex. Adaptor protein complexes are vesicle coat components involved both in vesicle formation and cargo selection. They control the vesicular transport of proteins in different trafficking pathways.</text>
</comment>
<comment type="subunit">
    <text evidence="1">May be part of the adaptor protein complex 4 (AP-4), a heterotetramer composed of two large adaptins (epsilon-type subunitand beta-type subunit), a medium adaptin (mu-type subunit) and a small adaptin (sigma-type).</text>
</comment>
<comment type="subcellular location">
    <subcellularLocation>
        <location evidence="1">Golgi apparatus</location>
        <location evidence="1">trans-Golgi network membrane</location>
        <topology evidence="1">Peripheral membrane protein</topology>
    </subcellularLocation>
</comment>
<comment type="similarity">
    <text evidence="3">Belongs to the adaptor complexes large subunit family.</text>
</comment>
<evidence type="ECO:0000250" key="1">
    <source>
        <dbReference type="UniProtKB" id="Q9Y6B7"/>
    </source>
</evidence>
<evidence type="ECO:0000256" key="2">
    <source>
        <dbReference type="SAM" id="MobiDB-lite"/>
    </source>
</evidence>
<evidence type="ECO:0000305" key="3"/>
<organism>
    <name type="scientific">Dictyostelium discoideum</name>
    <name type="common">Social amoeba</name>
    <dbReference type="NCBI Taxonomy" id="44689"/>
    <lineage>
        <taxon>Eukaryota</taxon>
        <taxon>Amoebozoa</taxon>
        <taxon>Evosea</taxon>
        <taxon>Eumycetozoa</taxon>
        <taxon>Dictyostelia</taxon>
        <taxon>Dictyosteliales</taxon>
        <taxon>Dictyosteliaceae</taxon>
        <taxon>Dictyostelium</taxon>
    </lineage>
</organism>
<name>AP4B_DICDI</name>
<keyword id="KW-0333">Golgi apparatus</keyword>
<keyword id="KW-0472">Membrane</keyword>
<keyword id="KW-0653">Protein transport</keyword>
<keyword id="KW-1185">Reference proteome</keyword>
<keyword id="KW-0813">Transport</keyword>
<accession>Q54R84</accession>
<sequence length="838" mass="96507">MTSTANYNNSGKDSYFSEIKKSELGLIKNNLSTAINERNADKIKDILQRIIYYMTIGMDVSVLFPDVIMVASSNDIIIKKLVYLYIVHYSKSNPDLLLLVVNTLRRDCIDRNPIIRGLALRSLCSLDSKNTLEYATIEINRSLTDFSGYVRKTALLGLAKLYHLSKEAFDLDIIIPKIFDMIMDQDPQVIVNAVSTLNEIKPGWSFTFDLVQHLMIKFKEFNEWSQCIILECLSRYTPSSEDESLDILNLLDDRLSHSNSALTLSTIKIFLKYTDEFEEIQEQVYERIKEPLITLMESSESNETSFTILHHIHLLMSRSPRLFNRYYKHFYCKFDDPLYIKTLKVQVLKEIASNQTFIESIDEILQELSEYVYEGDHSLCKQSINAITVIAQKHKNTQEKYPIDESVLEKIFLPYLSVSSNLGGAGDDNISINEGILSFILISLKDFLRVFPKHLKTVLPYINENLIGIGSVSNYTLPPSANESVLWMLGESPNSQVNSPYIIEEFFNEKFDQQPTFVKTQLLTTSLKVFFDRPGEMLPILKRILKKCCSDLSQDPGLHEISLFYSRIILLLDIDKAASIINSSKQTTSINTFLEDEINEYRDKIFDEFNTLSVLFGKHSTKFIKNKKQIENEKLQFLENQKNYLLSITDGNQNNNQNNNQNNNQNNNQNNNQNNQNNNNQNNNSKQLLKEIESSPNNLIDTFILDQQPELSPELFQSLWLSLEDGHKIDIQLDSPIDNSEIESVMSKQGIICLAFGSVDQQTKLYYYARQNLSFDIDFNSEQNQQQPQPIFIIEILIDENTLLMSILFKSPILKTLHNKFIPKFLSILSIPIPKIFN</sequence>